<gene>
    <name evidence="1" type="primary">rpsR</name>
    <name type="ordered locus">FN1656</name>
</gene>
<sequence length="72" mass="8425">MAEFRRRRAKLRVKAEEIDYKNVELLKRFVSDKGKINPSRLTGANAKLQRKIAKAVKRARNIALIPYTRTEK</sequence>
<reference key="1">
    <citation type="journal article" date="2002" name="J. Bacteriol.">
        <title>Genome sequence and analysis of the oral bacterium Fusobacterium nucleatum strain ATCC 25586.</title>
        <authorList>
            <person name="Kapatral V."/>
            <person name="Anderson I."/>
            <person name="Ivanova N."/>
            <person name="Reznik G."/>
            <person name="Los T."/>
            <person name="Lykidis A."/>
            <person name="Bhattacharyya A."/>
            <person name="Bartman A."/>
            <person name="Gardner W."/>
            <person name="Grechkin G."/>
            <person name="Zhu L."/>
            <person name="Vasieva O."/>
            <person name="Chu L."/>
            <person name="Kogan Y."/>
            <person name="Chaga O."/>
            <person name="Goltsman E."/>
            <person name="Bernal A."/>
            <person name="Larsen N."/>
            <person name="D'Souza M."/>
            <person name="Walunas T."/>
            <person name="Pusch G."/>
            <person name="Haselkorn R."/>
            <person name="Fonstein M."/>
            <person name="Kyrpides N.C."/>
            <person name="Overbeek R."/>
        </authorList>
    </citation>
    <scope>NUCLEOTIDE SEQUENCE [LARGE SCALE GENOMIC DNA]</scope>
    <source>
        <strain>ATCC 25586 / DSM 15643 / BCRC 10681 / CIP 101130 / JCM 8532 / KCTC 2640 / LMG 13131 / VPI 4355</strain>
    </source>
</reference>
<name>RS18_FUSNN</name>
<proteinExistence type="inferred from homology"/>
<organism>
    <name type="scientific">Fusobacterium nucleatum subsp. nucleatum (strain ATCC 25586 / DSM 15643 / BCRC 10681 / CIP 101130 / JCM 8532 / KCTC 2640 / LMG 13131 / VPI 4355)</name>
    <dbReference type="NCBI Taxonomy" id="190304"/>
    <lineage>
        <taxon>Bacteria</taxon>
        <taxon>Fusobacteriati</taxon>
        <taxon>Fusobacteriota</taxon>
        <taxon>Fusobacteriia</taxon>
        <taxon>Fusobacteriales</taxon>
        <taxon>Fusobacteriaceae</taxon>
        <taxon>Fusobacterium</taxon>
    </lineage>
</organism>
<dbReference type="EMBL" id="AE009951">
    <property type="protein sequence ID" value="AAL93771.1"/>
    <property type="molecule type" value="Genomic_DNA"/>
</dbReference>
<dbReference type="RefSeq" id="NP_602472.1">
    <property type="nucleotide sequence ID" value="NC_003454.1"/>
</dbReference>
<dbReference type="RefSeq" id="WP_005891822.1">
    <property type="nucleotide sequence ID" value="NZ_OZ209243.1"/>
</dbReference>
<dbReference type="SMR" id="Q8RIE4"/>
<dbReference type="FunCoup" id="Q8RIE4">
    <property type="interactions" value="335"/>
</dbReference>
<dbReference type="STRING" id="190304.FN1656"/>
<dbReference type="PaxDb" id="190304-FN1656"/>
<dbReference type="EnsemblBacteria" id="AAL93771">
    <property type="protein sequence ID" value="AAL93771"/>
    <property type="gene ID" value="FN1656"/>
</dbReference>
<dbReference type="GeneID" id="79810721"/>
<dbReference type="KEGG" id="fnu:FN1656"/>
<dbReference type="PATRIC" id="fig|190304.8.peg.149"/>
<dbReference type="eggNOG" id="COG0238">
    <property type="taxonomic scope" value="Bacteria"/>
</dbReference>
<dbReference type="HOGENOM" id="CLU_148710_2_3_0"/>
<dbReference type="InParanoid" id="Q8RIE4"/>
<dbReference type="BioCyc" id="FNUC190304:G1FZS-159-MONOMER"/>
<dbReference type="PRO" id="PR:Q8RIE4"/>
<dbReference type="Proteomes" id="UP000002521">
    <property type="component" value="Chromosome"/>
</dbReference>
<dbReference type="GO" id="GO:0022627">
    <property type="term" value="C:cytosolic small ribosomal subunit"/>
    <property type="evidence" value="ECO:0000318"/>
    <property type="project" value="GO_Central"/>
</dbReference>
<dbReference type="GO" id="GO:0070181">
    <property type="term" value="F:small ribosomal subunit rRNA binding"/>
    <property type="evidence" value="ECO:0000318"/>
    <property type="project" value="GO_Central"/>
</dbReference>
<dbReference type="GO" id="GO:0003735">
    <property type="term" value="F:structural constituent of ribosome"/>
    <property type="evidence" value="ECO:0000318"/>
    <property type="project" value="GO_Central"/>
</dbReference>
<dbReference type="GO" id="GO:0006412">
    <property type="term" value="P:translation"/>
    <property type="evidence" value="ECO:0000318"/>
    <property type="project" value="GO_Central"/>
</dbReference>
<dbReference type="FunFam" id="4.10.640.10:FF:000012">
    <property type="entry name" value="30S ribosomal protein S18"/>
    <property type="match status" value="1"/>
</dbReference>
<dbReference type="Gene3D" id="4.10.640.10">
    <property type="entry name" value="Ribosomal protein S18"/>
    <property type="match status" value="1"/>
</dbReference>
<dbReference type="HAMAP" id="MF_00270">
    <property type="entry name" value="Ribosomal_bS18"/>
    <property type="match status" value="1"/>
</dbReference>
<dbReference type="InterPro" id="IPR001648">
    <property type="entry name" value="Ribosomal_bS18"/>
</dbReference>
<dbReference type="InterPro" id="IPR018275">
    <property type="entry name" value="Ribosomal_bS18_CS"/>
</dbReference>
<dbReference type="InterPro" id="IPR036870">
    <property type="entry name" value="Ribosomal_bS18_sf"/>
</dbReference>
<dbReference type="NCBIfam" id="TIGR00165">
    <property type="entry name" value="S18"/>
    <property type="match status" value="1"/>
</dbReference>
<dbReference type="PANTHER" id="PTHR13479">
    <property type="entry name" value="30S RIBOSOMAL PROTEIN S18"/>
    <property type="match status" value="1"/>
</dbReference>
<dbReference type="PANTHER" id="PTHR13479:SF40">
    <property type="entry name" value="SMALL RIBOSOMAL SUBUNIT PROTEIN BS18M"/>
    <property type="match status" value="1"/>
</dbReference>
<dbReference type="Pfam" id="PF01084">
    <property type="entry name" value="Ribosomal_S18"/>
    <property type="match status" value="1"/>
</dbReference>
<dbReference type="PRINTS" id="PR00974">
    <property type="entry name" value="RIBOSOMALS18"/>
</dbReference>
<dbReference type="SUPFAM" id="SSF46911">
    <property type="entry name" value="Ribosomal protein S18"/>
    <property type="match status" value="1"/>
</dbReference>
<dbReference type="PROSITE" id="PS00057">
    <property type="entry name" value="RIBOSOMAL_S18"/>
    <property type="match status" value="1"/>
</dbReference>
<evidence type="ECO:0000255" key="1">
    <source>
        <dbReference type="HAMAP-Rule" id="MF_00270"/>
    </source>
</evidence>
<evidence type="ECO:0000305" key="2"/>
<protein>
    <recommendedName>
        <fullName evidence="1">Small ribosomal subunit protein bS18</fullName>
    </recommendedName>
    <alternativeName>
        <fullName evidence="2">30S ribosomal protein S18</fullName>
    </alternativeName>
</protein>
<feature type="chain" id="PRO_0000111158" description="Small ribosomal subunit protein bS18">
    <location>
        <begin position="1"/>
        <end position="72"/>
    </location>
</feature>
<keyword id="KW-1185">Reference proteome</keyword>
<keyword id="KW-0687">Ribonucleoprotein</keyword>
<keyword id="KW-0689">Ribosomal protein</keyword>
<keyword id="KW-0694">RNA-binding</keyword>
<keyword id="KW-0699">rRNA-binding</keyword>
<accession>Q8RIE4</accession>
<comment type="function">
    <text evidence="1">Binds as a heterodimer with protein bS6 to the central domain of the 16S rRNA, where it helps stabilize the platform of the 30S subunit.</text>
</comment>
<comment type="subunit">
    <text evidence="1">Part of the 30S ribosomal subunit. Forms a tight heterodimer with protein bS6.</text>
</comment>
<comment type="similarity">
    <text evidence="1">Belongs to the bacterial ribosomal protein bS18 family.</text>
</comment>